<comment type="function">
    <text evidence="1 3 4">Binds directly and specifically 1,2-Diacyl-sn-glycero-3-phospho-(1'-myo-inositol-3',4',5'-bisphosphate) (PIP3) leading to the recruitment of PIP3 to mitochondria and may play a role in the regulation of the platelet activation via AKT/GSK3B/cGMP signaling pathways (PubMed:29786068, PubMed:30576423). May act as transcription factor that regulates SREBP1 (isoform SREBP-1C) expression in order to modulate triglyceride (TG) homeostasis in hepatocytes (By similarity).</text>
</comment>
<comment type="subcellular location">
    <subcellularLocation>
        <location evidence="1">Mitochondrion outer membrane</location>
        <topology evidence="2">Multi-pass membrane protein</topology>
    </subcellularLocation>
    <subcellularLocation>
        <location evidence="1">Nucleus</location>
    </subcellularLocation>
</comment>
<comment type="tissue specificity">
    <text evidence="3 4">Highly expressed in platelet (at protein level) (PubMed:29786068, PubMed:30576423). Expressed in liver, brain, heart and muscle (PubMed:29786068).</text>
</comment>
<comment type="similarity">
    <text evidence="5">Belongs to the FUN14 family.</text>
</comment>
<feature type="chain" id="PRO_0000314617" description="FUN14 domain-containing protein 2">
    <location>
        <begin position="1"/>
        <end position="151"/>
    </location>
</feature>
<feature type="topological domain" description="Cytoplasmic" evidence="1">
    <location>
        <begin position="1"/>
        <end position="42"/>
    </location>
</feature>
<feature type="transmembrane region" description="Helical" evidence="2">
    <location>
        <begin position="43"/>
        <end position="63"/>
    </location>
</feature>
<feature type="topological domain" description="Mitochondrial intermembrane" evidence="1">
    <location>
        <begin position="64"/>
        <end position="69"/>
    </location>
</feature>
<feature type="transmembrane region" description="Helical" evidence="2">
    <location>
        <begin position="70"/>
        <end position="90"/>
    </location>
</feature>
<feature type="topological domain" description="Cytoplasmic" evidence="1">
    <location>
        <begin position="91"/>
        <end position="126"/>
    </location>
</feature>
<feature type="transmembrane region" description="Helical" evidence="2">
    <location>
        <begin position="127"/>
        <end position="147"/>
    </location>
</feature>
<feature type="topological domain" description="Mitochondrial intermembrane" evidence="1">
    <location>
        <begin position="148"/>
        <end position="151"/>
    </location>
</feature>
<feature type="sequence conflict" description="In Ref. 2; BAB29513." evidence="5" ref="2">
    <original>KL</original>
    <variation>NS</variation>
    <location>
        <begin position="30"/>
        <end position="31"/>
    </location>
</feature>
<feature type="sequence conflict" description="In Ref. 2; BAC27304." evidence="5" ref="2">
    <original>A</original>
    <variation>D</variation>
    <location>
        <position position="73"/>
    </location>
</feature>
<reference key="1">
    <citation type="submission" date="2003-02" db="EMBL/GenBank/DDBJ databases">
        <title>Identification and sequence analysis of a mouse homologous gene HCBP6.</title>
        <authorList>
            <person name="Cheng J."/>
            <person name="Li K."/>
            <person name="Wang L."/>
        </authorList>
    </citation>
    <scope>NUCLEOTIDE SEQUENCE [MRNA]</scope>
    <source>
        <strain>C57BL/6J</strain>
    </source>
</reference>
<reference key="2">
    <citation type="journal article" date="2005" name="Science">
        <title>The transcriptional landscape of the mammalian genome.</title>
        <authorList>
            <person name="Carninci P."/>
            <person name="Kasukawa T."/>
            <person name="Katayama S."/>
            <person name="Gough J."/>
            <person name="Frith M.C."/>
            <person name="Maeda N."/>
            <person name="Oyama R."/>
            <person name="Ravasi T."/>
            <person name="Lenhard B."/>
            <person name="Wells C."/>
            <person name="Kodzius R."/>
            <person name="Shimokawa K."/>
            <person name="Bajic V.B."/>
            <person name="Brenner S.E."/>
            <person name="Batalov S."/>
            <person name="Forrest A.R."/>
            <person name="Zavolan M."/>
            <person name="Davis M.J."/>
            <person name="Wilming L.G."/>
            <person name="Aidinis V."/>
            <person name="Allen J.E."/>
            <person name="Ambesi-Impiombato A."/>
            <person name="Apweiler R."/>
            <person name="Aturaliya R.N."/>
            <person name="Bailey T.L."/>
            <person name="Bansal M."/>
            <person name="Baxter L."/>
            <person name="Beisel K.W."/>
            <person name="Bersano T."/>
            <person name="Bono H."/>
            <person name="Chalk A.M."/>
            <person name="Chiu K.P."/>
            <person name="Choudhary V."/>
            <person name="Christoffels A."/>
            <person name="Clutterbuck D.R."/>
            <person name="Crowe M.L."/>
            <person name="Dalla E."/>
            <person name="Dalrymple B.P."/>
            <person name="de Bono B."/>
            <person name="Della Gatta G."/>
            <person name="di Bernardo D."/>
            <person name="Down T."/>
            <person name="Engstrom P."/>
            <person name="Fagiolini M."/>
            <person name="Faulkner G."/>
            <person name="Fletcher C.F."/>
            <person name="Fukushima T."/>
            <person name="Furuno M."/>
            <person name="Futaki S."/>
            <person name="Gariboldi M."/>
            <person name="Georgii-Hemming P."/>
            <person name="Gingeras T.R."/>
            <person name="Gojobori T."/>
            <person name="Green R.E."/>
            <person name="Gustincich S."/>
            <person name="Harbers M."/>
            <person name="Hayashi Y."/>
            <person name="Hensch T.K."/>
            <person name="Hirokawa N."/>
            <person name="Hill D."/>
            <person name="Huminiecki L."/>
            <person name="Iacono M."/>
            <person name="Ikeo K."/>
            <person name="Iwama A."/>
            <person name="Ishikawa T."/>
            <person name="Jakt M."/>
            <person name="Kanapin A."/>
            <person name="Katoh M."/>
            <person name="Kawasawa Y."/>
            <person name="Kelso J."/>
            <person name="Kitamura H."/>
            <person name="Kitano H."/>
            <person name="Kollias G."/>
            <person name="Krishnan S.P."/>
            <person name="Kruger A."/>
            <person name="Kummerfeld S.K."/>
            <person name="Kurochkin I.V."/>
            <person name="Lareau L.F."/>
            <person name="Lazarevic D."/>
            <person name="Lipovich L."/>
            <person name="Liu J."/>
            <person name="Liuni S."/>
            <person name="McWilliam S."/>
            <person name="Madan Babu M."/>
            <person name="Madera M."/>
            <person name="Marchionni L."/>
            <person name="Matsuda H."/>
            <person name="Matsuzawa S."/>
            <person name="Miki H."/>
            <person name="Mignone F."/>
            <person name="Miyake S."/>
            <person name="Morris K."/>
            <person name="Mottagui-Tabar S."/>
            <person name="Mulder N."/>
            <person name="Nakano N."/>
            <person name="Nakauchi H."/>
            <person name="Ng P."/>
            <person name="Nilsson R."/>
            <person name="Nishiguchi S."/>
            <person name="Nishikawa S."/>
            <person name="Nori F."/>
            <person name="Ohara O."/>
            <person name="Okazaki Y."/>
            <person name="Orlando V."/>
            <person name="Pang K.C."/>
            <person name="Pavan W.J."/>
            <person name="Pavesi G."/>
            <person name="Pesole G."/>
            <person name="Petrovsky N."/>
            <person name="Piazza S."/>
            <person name="Reed J."/>
            <person name="Reid J.F."/>
            <person name="Ring B.Z."/>
            <person name="Ringwald M."/>
            <person name="Rost B."/>
            <person name="Ruan Y."/>
            <person name="Salzberg S.L."/>
            <person name="Sandelin A."/>
            <person name="Schneider C."/>
            <person name="Schoenbach C."/>
            <person name="Sekiguchi K."/>
            <person name="Semple C.A."/>
            <person name="Seno S."/>
            <person name="Sessa L."/>
            <person name="Sheng Y."/>
            <person name="Shibata Y."/>
            <person name="Shimada H."/>
            <person name="Shimada K."/>
            <person name="Silva D."/>
            <person name="Sinclair B."/>
            <person name="Sperling S."/>
            <person name="Stupka E."/>
            <person name="Sugiura K."/>
            <person name="Sultana R."/>
            <person name="Takenaka Y."/>
            <person name="Taki K."/>
            <person name="Tammoja K."/>
            <person name="Tan S.L."/>
            <person name="Tang S."/>
            <person name="Taylor M.S."/>
            <person name="Tegner J."/>
            <person name="Teichmann S.A."/>
            <person name="Ueda H.R."/>
            <person name="van Nimwegen E."/>
            <person name="Verardo R."/>
            <person name="Wei C.L."/>
            <person name="Yagi K."/>
            <person name="Yamanishi H."/>
            <person name="Zabarovsky E."/>
            <person name="Zhu S."/>
            <person name="Zimmer A."/>
            <person name="Hide W."/>
            <person name="Bult C."/>
            <person name="Grimmond S.M."/>
            <person name="Teasdale R.D."/>
            <person name="Liu E.T."/>
            <person name="Brusic V."/>
            <person name="Quackenbush J."/>
            <person name="Wahlestedt C."/>
            <person name="Mattick J.S."/>
            <person name="Hume D.A."/>
            <person name="Kai C."/>
            <person name="Sasaki D."/>
            <person name="Tomaru Y."/>
            <person name="Fukuda S."/>
            <person name="Kanamori-Katayama M."/>
            <person name="Suzuki M."/>
            <person name="Aoki J."/>
            <person name="Arakawa T."/>
            <person name="Iida J."/>
            <person name="Imamura K."/>
            <person name="Itoh M."/>
            <person name="Kato T."/>
            <person name="Kawaji H."/>
            <person name="Kawagashira N."/>
            <person name="Kawashima T."/>
            <person name="Kojima M."/>
            <person name="Kondo S."/>
            <person name="Konno H."/>
            <person name="Nakano K."/>
            <person name="Ninomiya N."/>
            <person name="Nishio T."/>
            <person name="Okada M."/>
            <person name="Plessy C."/>
            <person name="Shibata K."/>
            <person name="Shiraki T."/>
            <person name="Suzuki S."/>
            <person name="Tagami M."/>
            <person name="Waki K."/>
            <person name="Watahiki A."/>
            <person name="Okamura-Oho Y."/>
            <person name="Suzuki H."/>
            <person name="Kawai J."/>
            <person name="Hayashizaki Y."/>
        </authorList>
    </citation>
    <scope>NUCLEOTIDE SEQUENCE [LARGE SCALE MRNA]</scope>
    <source>
        <strain>C57BL/6J</strain>
        <tissue>Forelimb</tissue>
        <tissue>Head</tissue>
        <tissue>Hippocampus</tissue>
    </source>
</reference>
<reference key="3">
    <citation type="journal article" date="2009" name="PLoS Biol.">
        <title>Lineage-specific biology revealed by a finished genome assembly of the mouse.</title>
        <authorList>
            <person name="Church D.M."/>
            <person name="Goodstadt L."/>
            <person name="Hillier L.W."/>
            <person name="Zody M.C."/>
            <person name="Goldstein S."/>
            <person name="She X."/>
            <person name="Bult C.J."/>
            <person name="Agarwala R."/>
            <person name="Cherry J.L."/>
            <person name="DiCuccio M."/>
            <person name="Hlavina W."/>
            <person name="Kapustin Y."/>
            <person name="Meric P."/>
            <person name="Maglott D."/>
            <person name="Birtle Z."/>
            <person name="Marques A.C."/>
            <person name="Graves T."/>
            <person name="Zhou S."/>
            <person name="Teague B."/>
            <person name="Potamousis K."/>
            <person name="Churas C."/>
            <person name="Place M."/>
            <person name="Herschleb J."/>
            <person name="Runnheim R."/>
            <person name="Forrest D."/>
            <person name="Amos-Landgraf J."/>
            <person name="Schwartz D.C."/>
            <person name="Cheng Z."/>
            <person name="Lindblad-Toh K."/>
            <person name="Eichler E.E."/>
            <person name="Ponting C.P."/>
        </authorList>
    </citation>
    <scope>NUCLEOTIDE SEQUENCE [LARGE SCALE GENOMIC DNA]</scope>
    <source>
        <strain>C57BL/6J</strain>
    </source>
</reference>
<reference key="4">
    <citation type="journal article" date="2004" name="Genome Res.">
        <title>The status, quality, and expansion of the NIH full-length cDNA project: the Mammalian Gene Collection (MGC).</title>
        <authorList>
            <consortium name="The MGC Project Team"/>
        </authorList>
    </citation>
    <scope>NUCLEOTIDE SEQUENCE [LARGE SCALE MRNA]</scope>
    <source>
        <strain>C57BL/6J</strain>
        <tissue>Brain</tissue>
        <tissue>Eye</tissue>
        <tissue>Testis</tissue>
    </source>
</reference>
<reference key="5">
    <citation type="journal article" date="2010" name="Cell">
        <title>A tissue-specific atlas of mouse protein phosphorylation and expression.</title>
        <authorList>
            <person name="Huttlin E.L."/>
            <person name="Jedrychowski M.P."/>
            <person name="Elias J.E."/>
            <person name="Goswami T."/>
            <person name="Rad R."/>
            <person name="Beausoleil S.A."/>
            <person name="Villen J."/>
            <person name="Haas W."/>
            <person name="Sowa M.E."/>
            <person name="Gygi S.P."/>
        </authorList>
    </citation>
    <scope>IDENTIFICATION BY MASS SPECTROMETRY [LARGE SCALE ANALYSIS]</scope>
    <source>
        <tissue>Brain</tissue>
        <tissue>Brown adipose tissue</tissue>
        <tissue>Heart</tissue>
        <tissue>Kidney</tissue>
        <tissue>Liver</tissue>
        <tissue>Lung</tissue>
        <tissue>Pancreas</tissue>
        <tissue>Testis</tissue>
    </source>
</reference>
<reference key="6">
    <citation type="journal article" date="2019" name="Cardiovasc. Res.">
        <title>FUNDC2 regulates platelet activation through AKT/GSK-3beta/cGMP axis.</title>
        <authorList>
            <person name="Ma Q."/>
            <person name="Zhang W."/>
            <person name="Zhu C."/>
            <person name="Liu J."/>
            <person name="Chen Q."/>
        </authorList>
    </citation>
    <scope>TISSUE SPECIFICITY</scope>
    <scope>FUNCTION</scope>
</reference>
<reference key="7">
    <citation type="journal article" date="2019" name="Cell Death Differ.">
        <title>Mitochondrial PIP3-binding protein FUNDC2 supports platelet survival via AKT signaling pathway.</title>
        <authorList>
            <person name="Ma Q."/>
            <person name="Zhu C."/>
            <person name="Zhang W."/>
            <person name="Ta N."/>
            <person name="Zhang R."/>
            <person name="Liu L."/>
            <person name="Feng D."/>
            <person name="Cheng H."/>
            <person name="Liu J."/>
            <person name="Chen Q."/>
        </authorList>
    </citation>
    <scope>TISSUE SPECIFICITY</scope>
    <scope>FUNCTION</scope>
</reference>
<protein>
    <recommendedName>
        <fullName evidence="5">FUN14 domain-containing protein 2</fullName>
    </recommendedName>
    <alternativeName>
        <fullName>Hepatitis C virus core-binding protein 6</fullName>
    </alternativeName>
</protein>
<evidence type="ECO:0000250" key="1">
    <source>
        <dbReference type="UniProtKB" id="Q9BWH2"/>
    </source>
</evidence>
<evidence type="ECO:0000255" key="2"/>
<evidence type="ECO:0000269" key="3">
    <source>
    </source>
</evidence>
<evidence type="ECO:0000269" key="4">
    <source>
    </source>
</evidence>
<evidence type="ECO:0000305" key="5"/>
<evidence type="ECO:0000312" key="6">
    <source>
        <dbReference type="MGI" id="MGI:1914641"/>
    </source>
</evidence>
<gene>
    <name evidence="6" type="primary">Fundc2</name>
    <name type="synonym">Hcbp6</name>
</gene>
<keyword id="KW-0472">Membrane</keyword>
<keyword id="KW-0496">Mitochondrion</keyword>
<keyword id="KW-1000">Mitochondrion outer membrane</keyword>
<keyword id="KW-0539">Nucleus</keyword>
<keyword id="KW-0597">Phosphoprotein</keyword>
<keyword id="KW-1185">Reference proteome</keyword>
<keyword id="KW-0804">Transcription</keyword>
<keyword id="KW-0805">Transcription regulation</keyword>
<keyword id="KW-0812">Transmembrane</keyword>
<keyword id="KW-1133">Transmembrane helix</keyword>
<name>FUND2_MOUSE</name>
<sequence length="151" mass="16564">MAANSQGNFDGKFEALDLAELTKKQPWWRKLFGQESGPSAEKYSVATQLVIGGVTGWCTGFVFQKVGKLAATAVGGGFFLLQLANHTGYIKVDWQRVEKDMKKAKEQLKIRKNKQIPTEVKSKAEEVVSFVKKNVLVTGGFFGGFLLGMAS</sequence>
<accession>Q9D6K8</accession>
<accession>Q80VT2</accession>
<accession>Q80YD9</accession>
<accession>Q8BSM8</accession>
<accession>Q9D617</accession>
<proteinExistence type="evidence at protein level"/>
<dbReference type="EMBL" id="AY234858">
    <property type="protein sequence ID" value="AAO89275.1"/>
    <property type="molecule type" value="mRNA"/>
</dbReference>
<dbReference type="EMBL" id="AK013460">
    <property type="protein sequence ID" value="BAB28867.1"/>
    <property type="molecule type" value="mRNA"/>
</dbReference>
<dbReference type="EMBL" id="AK014705">
    <property type="protein sequence ID" value="BAB29513.1"/>
    <property type="molecule type" value="mRNA"/>
</dbReference>
<dbReference type="EMBL" id="AK031214">
    <property type="protein sequence ID" value="BAC27304.1"/>
    <property type="molecule type" value="mRNA"/>
</dbReference>
<dbReference type="EMBL" id="AL731844">
    <property type="status" value="NOT_ANNOTATED_CDS"/>
    <property type="molecule type" value="Genomic_DNA"/>
</dbReference>
<dbReference type="EMBL" id="BC042794">
    <property type="protein sequence ID" value="AAH42794.1"/>
    <property type="molecule type" value="mRNA"/>
</dbReference>
<dbReference type="EMBL" id="BC049566">
    <property type="protein sequence ID" value="AAH49566.2"/>
    <property type="molecule type" value="mRNA"/>
</dbReference>
<dbReference type="EMBL" id="BC061464">
    <property type="protein sequence ID" value="AAH61464.1"/>
    <property type="molecule type" value="mRNA"/>
</dbReference>
<dbReference type="CCDS" id="CCDS30239.1"/>
<dbReference type="RefSeq" id="NP_080402.3">
    <property type="nucleotide sequence ID" value="NM_026126.4"/>
</dbReference>
<dbReference type="BioGRID" id="212155">
    <property type="interactions" value="9"/>
</dbReference>
<dbReference type="FunCoup" id="Q9D6K8">
    <property type="interactions" value="1398"/>
</dbReference>
<dbReference type="IntAct" id="Q9D6K8">
    <property type="interactions" value="1"/>
</dbReference>
<dbReference type="STRING" id="10090.ENSMUSP00000033541"/>
<dbReference type="GlyGen" id="Q9D6K8">
    <property type="glycosylation" value="1 site, 1 O-linked glycan (1 site)"/>
</dbReference>
<dbReference type="iPTMnet" id="Q9D6K8"/>
<dbReference type="PhosphoSitePlus" id="Q9D6K8"/>
<dbReference type="SwissPalm" id="Q9D6K8"/>
<dbReference type="jPOST" id="Q9D6K8"/>
<dbReference type="PaxDb" id="10090-ENSMUSP00000033541"/>
<dbReference type="PeptideAtlas" id="Q9D6K8"/>
<dbReference type="ProteomicsDB" id="271645"/>
<dbReference type="Pumba" id="Q9D6K8"/>
<dbReference type="Antibodypedia" id="31390">
    <property type="antibodies" value="91 antibodies from 16 providers"/>
</dbReference>
<dbReference type="DNASU" id="67391"/>
<dbReference type="Ensembl" id="ENSMUST00000033541.5">
    <property type="protein sequence ID" value="ENSMUSP00000033541.5"/>
    <property type="gene ID" value="ENSMUSG00000031198.5"/>
</dbReference>
<dbReference type="GeneID" id="67391"/>
<dbReference type="KEGG" id="mmu:67391"/>
<dbReference type="UCSC" id="uc009tpu.2">
    <property type="organism name" value="mouse"/>
</dbReference>
<dbReference type="AGR" id="MGI:1914641"/>
<dbReference type="CTD" id="65991"/>
<dbReference type="MGI" id="MGI:1914641">
    <property type="gene designation" value="Fundc2"/>
</dbReference>
<dbReference type="VEuPathDB" id="HostDB:ENSMUSG00000031198"/>
<dbReference type="eggNOG" id="KOG4099">
    <property type="taxonomic scope" value="Eukaryota"/>
</dbReference>
<dbReference type="GeneTree" id="ENSGT00940000154783"/>
<dbReference type="HOGENOM" id="CLU_095425_2_0_1"/>
<dbReference type="InParanoid" id="Q9D6K8"/>
<dbReference type="OMA" id="AAPSFKM"/>
<dbReference type="OrthoDB" id="163794at2759"/>
<dbReference type="PhylomeDB" id="Q9D6K8"/>
<dbReference type="TreeFam" id="TF300280"/>
<dbReference type="BioGRID-ORCS" id="67391">
    <property type="hits" value="2 hits in 77 CRISPR screens"/>
</dbReference>
<dbReference type="ChiTaRS" id="Fundc2">
    <property type="organism name" value="mouse"/>
</dbReference>
<dbReference type="PRO" id="PR:Q9D6K8"/>
<dbReference type="Proteomes" id="UP000000589">
    <property type="component" value="Chromosome X"/>
</dbReference>
<dbReference type="RNAct" id="Q9D6K8">
    <property type="molecule type" value="protein"/>
</dbReference>
<dbReference type="Bgee" id="ENSMUSG00000031198">
    <property type="expression patterns" value="Expressed in bone fossa and 245 other cell types or tissues"/>
</dbReference>
<dbReference type="GO" id="GO:0005741">
    <property type="term" value="C:mitochondrial outer membrane"/>
    <property type="evidence" value="ECO:0007669"/>
    <property type="project" value="UniProtKB-SubCell"/>
</dbReference>
<dbReference type="GO" id="GO:0005634">
    <property type="term" value="C:nucleus"/>
    <property type="evidence" value="ECO:0007669"/>
    <property type="project" value="UniProtKB-SubCell"/>
</dbReference>
<dbReference type="GO" id="GO:0005547">
    <property type="term" value="F:phosphatidylinositol-3,4,5-trisphosphate binding"/>
    <property type="evidence" value="ECO:0000250"/>
    <property type="project" value="UniProtKB"/>
</dbReference>
<dbReference type="GO" id="GO:0035356">
    <property type="term" value="P:intracellular triglyceride homeostasis"/>
    <property type="evidence" value="ECO:0000250"/>
    <property type="project" value="UniProtKB"/>
</dbReference>
<dbReference type="GO" id="GO:0010543">
    <property type="term" value="P:regulation of platelet activation"/>
    <property type="evidence" value="ECO:0000315"/>
    <property type="project" value="UniProtKB"/>
</dbReference>
<dbReference type="InterPro" id="IPR007014">
    <property type="entry name" value="FUN14"/>
</dbReference>
<dbReference type="PANTHER" id="PTHR21346">
    <property type="entry name" value="FUN14 DOMAIN CONTAINING"/>
    <property type="match status" value="1"/>
</dbReference>
<dbReference type="PANTHER" id="PTHR21346:SF5">
    <property type="entry name" value="FUN14 DOMAIN-CONTAINING PROTEIN 2"/>
    <property type="match status" value="1"/>
</dbReference>
<dbReference type="Pfam" id="PF04930">
    <property type="entry name" value="FUN14"/>
    <property type="match status" value="1"/>
</dbReference>
<organism>
    <name type="scientific">Mus musculus</name>
    <name type="common">Mouse</name>
    <dbReference type="NCBI Taxonomy" id="10090"/>
    <lineage>
        <taxon>Eukaryota</taxon>
        <taxon>Metazoa</taxon>
        <taxon>Chordata</taxon>
        <taxon>Craniata</taxon>
        <taxon>Vertebrata</taxon>
        <taxon>Euteleostomi</taxon>
        <taxon>Mammalia</taxon>
        <taxon>Eutheria</taxon>
        <taxon>Euarchontoglires</taxon>
        <taxon>Glires</taxon>
        <taxon>Rodentia</taxon>
        <taxon>Myomorpha</taxon>
        <taxon>Muroidea</taxon>
        <taxon>Muridae</taxon>
        <taxon>Murinae</taxon>
        <taxon>Mus</taxon>
        <taxon>Mus</taxon>
    </lineage>
</organism>